<organism>
    <name type="scientific">Xanthomonas campestris pv. campestris (strain B100)</name>
    <dbReference type="NCBI Taxonomy" id="509169"/>
    <lineage>
        <taxon>Bacteria</taxon>
        <taxon>Pseudomonadati</taxon>
        <taxon>Pseudomonadota</taxon>
        <taxon>Gammaproteobacteria</taxon>
        <taxon>Lysobacterales</taxon>
        <taxon>Lysobacteraceae</taxon>
        <taxon>Xanthomonas</taxon>
    </lineage>
</organism>
<feature type="chain" id="PRO_1000139352" description="GTP 3',8-cyclase">
    <location>
        <begin position="1"/>
        <end position="339"/>
    </location>
</feature>
<feature type="domain" description="Radical SAM core" evidence="2">
    <location>
        <begin position="13"/>
        <end position="249"/>
    </location>
</feature>
<feature type="binding site" evidence="1">
    <location>
        <position position="22"/>
    </location>
    <ligand>
        <name>GTP</name>
        <dbReference type="ChEBI" id="CHEBI:37565"/>
    </ligand>
</feature>
<feature type="binding site" evidence="1">
    <location>
        <position position="29"/>
    </location>
    <ligand>
        <name>[4Fe-4S] cluster</name>
        <dbReference type="ChEBI" id="CHEBI:49883"/>
        <label>1</label>
        <note>4Fe-4S-S-AdoMet</note>
    </ligand>
</feature>
<feature type="binding site" evidence="1">
    <location>
        <position position="33"/>
    </location>
    <ligand>
        <name>[4Fe-4S] cluster</name>
        <dbReference type="ChEBI" id="CHEBI:49883"/>
        <label>1</label>
        <note>4Fe-4S-S-AdoMet</note>
    </ligand>
</feature>
<feature type="binding site" evidence="1">
    <location>
        <position position="35"/>
    </location>
    <ligand>
        <name>S-adenosyl-L-methionine</name>
        <dbReference type="ChEBI" id="CHEBI:59789"/>
    </ligand>
</feature>
<feature type="binding site" evidence="1">
    <location>
        <position position="36"/>
    </location>
    <ligand>
        <name>[4Fe-4S] cluster</name>
        <dbReference type="ChEBI" id="CHEBI:49883"/>
        <label>1</label>
        <note>4Fe-4S-S-AdoMet</note>
    </ligand>
</feature>
<feature type="binding site" evidence="1">
    <location>
        <position position="75"/>
    </location>
    <ligand>
        <name>GTP</name>
        <dbReference type="ChEBI" id="CHEBI:37565"/>
    </ligand>
</feature>
<feature type="binding site" evidence="1">
    <location>
        <position position="79"/>
    </location>
    <ligand>
        <name>S-adenosyl-L-methionine</name>
        <dbReference type="ChEBI" id="CHEBI:59789"/>
    </ligand>
</feature>
<feature type="binding site" evidence="1">
    <location>
        <position position="106"/>
    </location>
    <ligand>
        <name>GTP</name>
        <dbReference type="ChEBI" id="CHEBI:37565"/>
    </ligand>
</feature>
<feature type="binding site" evidence="1">
    <location>
        <position position="130"/>
    </location>
    <ligand>
        <name>S-adenosyl-L-methionine</name>
        <dbReference type="ChEBI" id="CHEBI:59789"/>
    </ligand>
</feature>
<feature type="binding site" evidence="1">
    <location>
        <position position="168"/>
    </location>
    <ligand>
        <name>GTP</name>
        <dbReference type="ChEBI" id="CHEBI:37565"/>
    </ligand>
</feature>
<feature type="binding site" evidence="1">
    <location>
        <position position="202"/>
    </location>
    <ligand>
        <name>S-adenosyl-L-methionine</name>
        <dbReference type="ChEBI" id="CHEBI:59789"/>
    </ligand>
</feature>
<feature type="binding site" evidence="1">
    <location>
        <position position="266"/>
    </location>
    <ligand>
        <name>[4Fe-4S] cluster</name>
        <dbReference type="ChEBI" id="CHEBI:49883"/>
        <label>2</label>
        <note>4Fe-4S-substrate</note>
    </ligand>
</feature>
<feature type="binding site" evidence="1">
    <location>
        <position position="269"/>
    </location>
    <ligand>
        <name>[4Fe-4S] cluster</name>
        <dbReference type="ChEBI" id="CHEBI:49883"/>
        <label>2</label>
        <note>4Fe-4S-substrate</note>
    </ligand>
</feature>
<feature type="binding site" evidence="1">
    <location>
        <begin position="271"/>
        <end position="273"/>
    </location>
    <ligand>
        <name>GTP</name>
        <dbReference type="ChEBI" id="CHEBI:37565"/>
    </ligand>
</feature>
<feature type="binding site" evidence="1">
    <location>
        <position position="283"/>
    </location>
    <ligand>
        <name>[4Fe-4S] cluster</name>
        <dbReference type="ChEBI" id="CHEBI:49883"/>
        <label>2</label>
        <note>4Fe-4S-substrate</note>
    </ligand>
</feature>
<evidence type="ECO:0000255" key="1">
    <source>
        <dbReference type="HAMAP-Rule" id="MF_01225"/>
    </source>
</evidence>
<evidence type="ECO:0000255" key="2">
    <source>
        <dbReference type="PROSITE-ProRule" id="PRU01266"/>
    </source>
</evidence>
<sequence length="339" mass="37350">MLPDLSAAPMQDRYGRPLRDLRLSVIEACNFRCGYCMPADRVPDDYGLDADQRLSFDQLETLVRAFVAVGVTKLRLTGGEPLLRKNLPVLIQRLAAIEGIEDLALTTNGALLARQAVALRQAGLRRITVSMDALEPALFRQMSGGRGEIDQVLAGIAAAEQAGFDRLKINCVVQRDVNEDQVLPLVEHFRGTGHVLRFIEFMDVGSCNGWRPEAVVTSAQLRDRIHARWPLAPLDANYTGEVAQRHAFADGLGEVGFVSSVSVPFCGDCQRARVSADGHLYTCLFASQGHDLKPALAEGEQGLATHLRQRWSVRADRYSEVRASTSRRRKPVEMFLIGG</sequence>
<dbReference type="EC" id="4.1.99.22" evidence="1"/>
<dbReference type="EMBL" id="AM920689">
    <property type="protein sequence ID" value="CAP52729.1"/>
    <property type="molecule type" value="Genomic_DNA"/>
</dbReference>
<dbReference type="SMR" id="B0RTE0"/>
<dbReference type="KEGG" id="xca:xcc-b100_3364"/>
<dbReference type="HOGENOM" id="CLU_009273_0_1_6"/>
<dbReference type="UniPathway" id="UPA00344"/>
<dbReference type="Proteomes" id="UP000001188">
    <property type="component" value="Chromosome"/>
</dbReference>
<dbReference type="GO" id="GO:0051539">
    <property type="term" value="F:4 iron, 4 sulfur cluster binding"/>
    <property type="evidence" value="ECO:0007669"/>
    <property type="project" value="UniProtKB-UniRule"/>
</dbReference>
<dbReference type="GO" id="GO:0061799">
    <property type="term" value="F:cyclic pyranopterin monophosphate synthase activity"/>
    <property type="evidence" value="ECO:0007669"/>
    <property type="project" value="TreeGrafter"/>
</dbReference>
<dbReference type="GO" id="GO:0061798">
    <property type="term" value="F:GTP 3',8'-cyclase activity"/>
    <property type="evidence" value="ECO:0007669"/>
    <property type="project" value="UniProtKB-UniRule"/>
</dbReference>
<dbReference type="GO" id="GO:0005525">
    <property type="term" value="F:GTP binding"/>
    <property type="evidence" value="ECO:0007669"/>
    <property type="project" value="UniProtKB-UniRule"/>
</dbReference>
<dbReference type="GO" id="GO:0046872">
    <property type="term" value="F:metal ion binding"/>
    <property type="evidence" value="ECO:0007669"/>
    <property type="project" value="UniProtKB-KW"/>
</dbReference>
<dbReference type="GO" id="GO:1904047">
    <property type="term" value="F:S-adenosyl-L-methionine binding"/>
    <property type="evidence" value="ECO:0007669"/>
    <property type="project" value="UniProtKB-UniRule"/>
</dbReference>
<dbReference type="GO" id="GO:0006777">
    <property type="term" value="P:Mo-molybdopterin cofactor biosynthetic process"/>
    <property type="evidence" value="ECO:0007669"/>
    <property type="project" value="UniProtKB-UniRule"/>
</dbReference>
<dbReference type="CDD" id="cd01335">
    <property type="entry name" value="Radical_SAM"/>
    <property type="match status" value="1"/>
</dbReference>
<dbReference type="CDD" id="cd21117">
    <property type="entry name" value="Twitch_MoaA"/>
    <property type="match status" value="1"/>
</dbReference>
<dbReference type="Gene3D" id="3.20.20.70">
    <property type="entry name" value="Aldolase class I"/>
    <property type="match status" value="1"/>
</dbReference>
<dbReference type="HAMAP" id="MF_01225_B">
    <property type="entry name" value="MoaA_B"/>
    <property type="match status" value="1"/>
</dbReference>
<dbReference type="InterPro" id="IPR013785">
    <property type="entry name" value="Aldolase_TIM"/>
</dbReference>
<dbReference type="InterPro" id="IPR006638">
    <property type="entry name" value="Elp3/MiaA/NifB-like_rSAM"/>
</dbReference>
<dbReference type="InterPro" id="IPR013483">
    <property type="entry name" value="MoaA"/>
</dbReference>
<dbReference type="InterPro" id="IPR000385">
    <property type="entry name" value="MoaA_NifB_PqqE_Fe-S-bd_CS"/>
</dbReference>
<dbReference type="InterPro" id="IPR010505">
    <property type="entry name" value="MoaA_twitch"/>
</dbReference>
<dbReference type="InterPro" id="IPR050105">
    <property type="entry name" value="MoCo_biosynth_MoaA/MoaC"/>
</dbReference>
<dbReference type="InterPro" id="IPR007197">
    <property type="entry name" value="rSAM"/>
</dbReference>
<dbReference type="NCBIfam" id="TIGR02666">
    <property type="entry name" value="moaA"/>
    <property type="match status" value="1"/>
</dbReference>
<dbReference type="PANTHER" id="PTHR22960:SF0">
    <property type="entry name" value="MOLYBDENUM COFACTOR BIOSYNTHESIS PROTEIN 1"/>
    <property type="match status" value="1"/>
</dbReference>
<dbReference type="PANTHER" id="PTHR22960">
    <property type="entry name" value="MOLYBDOPTERIN COFACTOR SYNTHESIS PROTEIN A"/>
    <property type="match status" value="1"/>
</dbReference>
<dbReference type="Pfam" id="PF13353">
    <property type="entry name" value="Fer4_12"/>
    <property type="match status" value="1"/>
</dbReference>
<dbReference type="Pfam" id="PF06463">
    <property type="entry name" value="Mob_synth_C"/>
    <property type="match status" value="1"/>
</dbReference>
<dbReference type="Pfam" id="PF04055">
    <property type="entry name" value="Radical_SAM"/>
    <property type="match status" value="1"/>
</dbReference>
<dbReference type="SFLD" id="SFLDG01383">
    <property type="entry name" value="cyclic_pyranopterin_phosphate"/>
    <property type="match status" value="1"/>
</dbReference>
<dbReference type="SFLD" id="SFLDS00029">
    <property type="entry name" value="Radical_SAM"/>
    <property type="match status" value="1"/>
</dbReference>
<dbReference type="SMART" id="SM00729">
    <property type="entry name" value="Elp3"/>
    <property type="match status" value="1"/>
</dbReference>
<dbReference type="SUPFAM" id="SSF102114">
    <property type="entry name" value="Radical SAM enzymes"/>
    <property type="match status" value="1"/>
</dbReference>
<dbReference type="PROSITE" id="PS01305">
    <property type="entry name" value="MOAA_NIFB_PQQE"/>
    <property type="match status" value="1"/>
</dbReference>
<dbReference type="PROSITE" id="PS51918">
    <property type="entry name" value="RADICAL_SAM"/>
    <property type="match status" value="1"/>
</dbReference>
<keyword id="KW-0004">4Fe-4S</keyword>
<keyword id="KW-0342">GTP-binding</keyword>
<keyword id="KW-0408">Iron</keyword>
<keyword id="KW-0411">Iron-sulfur</keyword>
<keyword id="KW-0456">Lyase</keyword>
<keyword id="KW-0479">Metal-binding</keyword>
<keyword id="KW-0501">Molybdenum cofactor biosynthesis</keyword>
<keyword id="KW-0547">Nucleotide-binding</keyword>
<keyword id="KW-0949">S-adenosyl-L-methionine</keyword>
<gene>
    <name evidence="1" type="primary">moaA</name>
    <name type="ordered locus">xcc-b100_3364</name>
</gene>
<comment type="function">
    <text evidence="1">Catalyzes the cyclization of GTP to (8S)-3',8-cyclo-7,8-dihydroguanosine 5'-triphosphate.</text>
</comment>
<comment type="catalytic activity">
    <reaction evidence="1">
        <text>GTP + AH2 + S-adenosyl-L-methionine = (8S)-3',8-cyclo-7,8-dihydroguanosine 5'-triphosphate + 5'-deoxyadenosine + L-methionine + A + H(+)</text>
        <dbReference type="Rhea" id="RHEA:49576"/>
        <dbReference type="ChEBI" id="CHEBI:13193"/>
        <dbReference type="ChEBI" id="CHEBI:15378"/>
        <dbReference type="ChEBI" id="CHEBI:17319"/>
        <dbReference type="ChEBI" id="CHEBI:17499"/>
        <dbReference type="ChEBI" id="CHEBI:37565"/>
        <dbReference type="ChEBI" id="CHEBI:57844"/>
        <dbReference type="ChEBI" id="CHEBI:59789"/>
        <dbReference type="ChEBI" id="CHEBI:131766"/>
        <dbReference type="EC" id="4.1.99.22"/>
    </reaction>
</comment>
<comment type="cofactor">
    <cofactor evidence="1">
        <name>[4Fe-4S] cluster</name>
        <dbReference type="ChEBI" id="CHEBI:49883"/>
    </cofactor>
    <text evidence="1">Binds 2 [4Fe-4S] clusters. Binds 1 [4Fe-4S] cluster coordinated with 3 cysteines and an exchangeable S-adenosyl-L-methionine and 1 [4Fe-4S] cluster coordinated with 3 cysteines and the GTP-derived substrate.</text>
</comment>
<comment type="pathway">
    <text evidence="1">Cofactor biosynthesis; molybdopterin biosynthesis.</text>
</comment>
<comment type="subunit">
    <text evidence="1">Monomer and homodimer.</text>
</comment>
<comment type="similarity">
    <text evidence="1">Belongs to the radical SAM superfamily. MoaA family.</text>
</comment>
<protein>
    <recommendedName>
        <fullName evidence="1">GTP 3',8-cyclase</fullName>
        <ecNumber evidence="1">4.1.99.22</ecNumber>
    </recommendedName>
    <alternativeName>
        <fullName evidence="1">Molybdenum cofactor biosynthesis protein A</fullName>
    </alternativeName>
</protein>
<proteinExistence type="inferred from homology"/>
<name>MOAA_XANCB</name>
<accession>B0RTE0</accession>
<reference key="1">
    <citation type="journal article" date="2008" name="J. Biotechnol.">
        <title>The genome of Xanthomonas campestris pv. campestris B100 and its use for the reconstruction of metabolic pathways involved in xanthan biosynthesis.</title>
        <authorList>
            <person name="Vorhoelter F.-J."/>
            <person name="Schneiker S."/>
            <person name="Goesmann A."/>
            <person name="Krause L."/>
            <person name="Bekel T."/>
            <person name="Kaiser O."/>
            <person name="Linke B."/>
            <person name="Patschkowski T."/>
            <person name="Rueckert C."/>
            <person name="Schmid J."/>
            <person name="Sidhu V.K."/>
            <person name="Sieber V."/>
            <person name="Tauch A."/>
            <person name="Watt S.A."/>
            <person name="Weisshaar B."/>
            <person name="Becker A."/>
            <person name="Niehaus K."/>
            <person name="Puehler A."/>
        </authorList>
    </citation>
    <scope>NUCLEOTIDE SEQUENCE [LARGE SCALE GENOMIC DNA]</scope>
    <source>
        <strain>B100</strain>
    </source>
</reference>